<sequence>MDKLKISANGPLNGEITVSGAKNAALPLMCAGLLTSGTLRLKNVPMLADVKTTQKLLQGMGARVLTDNISEFEINGGTVNNTCAPYELVRTMRASILVLGPTLARFGEAQVSLPGGCAIGSRPVDQHLKGLEAMGAEIVIEHGYVKAKGKLKGTRVAMDVVTVGGTENLLMAATLAEGTTVLENCAIEPEVVDLAECLVKMGAKISGIGTSTMIVEGVDELHGCEHSVVPDRIEAGTFLCAVAITGGRVVLRNAAPKTMEVVLDKLVEAGAVIEAGDDWIAIDMRQRPKAVDIRTVVHPGFPTDMQAQFMALNAVAEGSCRVVETIFENRFMHVPELNRMGANITTEGNTAFVQGVERLSGAVVKATDLRASASLVIAGLAARGETVVEQIYHLDRGYENIEKKLGSVGAKIERVSG</sequence>
<proteinExistence type="inferred from homology"/>
<dbReference type="EC" id="2.5.1.7" evidence="1"/>
<dbReference type="EMBL" id="AL157959">
    <property type="protein sequence ID" value="CAM07564.1"/>
    <property type="molecule type" value="Genomic_DNA"/>
</dbReference>
<dbReference type="PIR" id="F82020">
    <property type="entry name" value="F82020"/>
</dbReference>
<dbReference type="RefSeq" id="WP_002221762.1">
    <property type="nucleotide sequence ID" value="NC_003116.1"/>
</dbReference>
<dbReference type="SMR" id="Q9JWS7"/>
<dbReference type="EnsemblBacteria" id="CAM07564">
    <property type="protein sequence ID" value="CAM07564"/>
    <property type="gene ID" value="NMA0258"/>
</dbReference>
<dbReference type="GeneID" id="93387091"/>
<dbReference type="KEGG" id="nma:NMA0258"/>
<dbReference type="HOGENOM" id="CLU_027387_0_0_4"/>
<dbReference type="UniPathway" id="UPA00219"/>
<dbReference type="Proteomes" id="UP000000626">
    <property type="component" value="Chromosome"/>
</dbReference>
<dbReference type="GO" id="GO:0005737">
    <property type="term" value="C:cytoplasm"/>
    <property type="evidence" value="ECO:0007669"/>
    <property type="project" value="UniProtKB-SubCell"/>
</dbReference>
<dbReference type="GO" id="GO:0008760">
    <property type="term" value="F:UDP-N-acetylglucosamine 1-carboxyvinyltransferase activity"/>
    <property type="evidence" value="ECO:0007669"/>
    <property type="project" value="UniProtKB-UniRule"/>
</dbReference>
<dbReference type="GO" id="GO:0051301">
    <property type="term" value="P:cell division"/>
    <property type="evidence" value="ECO:0007669"/>
    <property type="project" value="UniProtKB-KW"/>
</dbReference>
<dbReference type="GO" id="GO:0071555">
    <property type="term" value="P:cell wall organization"/>
    <property type="evidence" value="ECO:0007669"/>
    <property type="project" value="UniProtKB-KW"/>
</dbReference>
<dbReference type="GO" id="GO:0009252">
    <property type="term" value="P:peptidoglycan biosynthetic process"/>
    <property type="evidence" value="ECO:0007669"/>
    <property type="project" value="UniProtKB-UniRule"/>
</dbReference>
<dbReference type="GO" id="GO:0008360">
    <property type="term" value="P:regulation of cell shape"/>
    <property type="evidence" value="ECO:0007669"/>
    <property type="project" value="UniProtKB-KW"/>
</dbReference>
<dbReference type="GO" id="GO:0019277">
    <property type="term" value="P:UDP-N-acetylgalactosamine biosynthetic process"/>
    <property type="evidence" value="ECO:0007669"/>
    <property type="project" value="InterPro"/>
</dbReference>
<dbReference type="CDD" id="cd01555">
    <property type="entry name" value="UdpNAET"/>
    <property type="match status" value="1"/>
</dbReference>
<dbReference type="FunFam" id="3.65.10.10:FF:000002">
    <property type="entry name" value="UDP-N-acetylglucosamine 1-carboxyvinyltransferase"/>
    <property type="match status" value="1"/>
</dbReference>
<dbReference type="Gene3D" id="3.65.10.10">
    <property type="entry name" value="Enolpyruvate transferase domain"/>
    <property type="match status" value="2"/>
</dbReference>
<dbReference type="HAMAP" id="MF_00111">
    <property type="entry name" value="MurA"/>
    <property type="match status" value="1"/>
</dbReference>
<dbReference type="InterPro" id="IPR001986">
    <property type="entry name" value="Enolpyruvate_Tfrase_dom"/>
</dbReference>
<dbReference type="InterPro" id="IPR036968">
    <property type="entry name" value="Enolpyruvate_Tfrase_sf"/>
</dbReference>
<dbReference type="InterPro" id="IPR050068">
    <property type="entry name" value="MurA_subfamily"/>
</dbReference>
<dbReference type="InterPro" id="IPR013792">
    <property type="entry name" value="RNA3'P_cycl/enolpyr_Trfase_a/b"/>
</dbReference>
<dbReference type="InterPro" id="IPR005750">
    <property type="entry name" value="UDP_GlcNAc_COvinyl_MurA"/>
</dbReference>
<dbReference type="NCBIfam" id="TIGR01072">
    <property type="entry name" value="murA"/>
    <property type="match status" value="1"/>
</dbReference>
<dbReference type="NCBIfam" id="NF006873">
    <property type="entry name" value="PRK09369.1"/>
    <property type="match status" value="1"/>
</dbReference>
<dbReference type="PANTHER" id="PTHR43783">
    <property type="entry name" value="UDP-N-ACETYLGLUCOSAMINE 1-CARBOXYVINYLTRANSFERASE"/>
    <property type="match status" value="1"/>
</dbReference>
<dbReference type="PANTHER" id="PTHR43783:SF1">
    <property type="entry name" value="UDP-N-ACETYLGLUCOSAMINE 1-CARBOXYVINYLTRANSFERASE"/>
    <property type="match status" value="1"/>
</dbReference>
<dbReference type="Pfam" id="PF00275">
    <property type="entry name" value="EPSP_synthase"/>
    <property type="match status" value="1"/>
</dbReference>
<dbReference type="SUPFAM" id="SSF55205">
    <property type="entry name" value="EPT/RTPC-like"/>
    <property type="match status" value="1"/>
</dbReference>
<organism>
    <name type="scientific">Neisseria meningitidis serogroup A / serotype 4A (strain DSM 15465 / Z2491)</name>
    <dbReference type="NCBI Taxonomy" id="122587"/>
    <lineage>
        <taxon>Bacteria</taxon>
        <taxon>Pseudomonadati</taxon>
        <taxon>Pseudomonadota</taxon>
        <taxon>Betaproteobacteria</taxon>
        <taxon>Neisseriales</taxon>
        <taxon>Neisseriaceae</taxon>
        <taxon>Neisseria</taxon>
    </lineage>
</organism>
<keyword id="KW-0131">Cell cycle</keyword>
<keyword id="KW-0132">Cell division</keyword>
<keyword id="KW-0133">Cell shape</keyword>
<keyword id="KW-0961">Cell wall biogenesis/degradation</keyword>
<keyword id="KW-0963">Cytoplasm</keyword>
<keyword id="KW-0573">Peptidoglycan synthesis</keyword>
<keyword id="KW-0670">Pyruvate</keyword>
<keyword id="KW-0808">Transferase</keyword>
<accession>Q9JWS7</accession>
<accession>A1IPA4</accession>
<evidence type="ECO:0000255" key="1">
    <source>
        <dbReference type="HAMAP-Rule" id="MF_00111"/>
    </source>
</evidence>
<name>MURA_NEIMA</name>
<comment type="function">
    <text evidence="1">Cell wall formation. Adds enolpyruvyl to UDP-N-acetylglucosamine.</text>
</comment>
<comment type="catalytic activity">
    <reaction evidence="1">
        <text>phosphoenolpyruvate + UDP-N-acetyl-alpha-D-glucosamine = UDP-N-acetyl-3-O-(1-carboxyvinyl)-alpha-D-glucosamine + phosphate</text>
        <dbReference type="Rhea" id="RHEA:18681"/>
        <dbReference type="ChEBI" id="CHEBI:43474"/>
        <dbReference type="ChEBI" id="CHEBI:57705"/>
        <dbReference type="ChEBI" id="CHEBI:58702"/>
        <dbReference type="ChEBI" id="CHEBI:68483"/>
        <dbReference type="EC" id="2.5.1.7"/>
    </reaction>
</comment>
<comment type="pathway">
    <text evidence="1">Cell wall biogenesis; peptidoglycan biosynthesis.</text>
</comment>
<comment type="subcellular location">
    <subcellularLocation>
        <location evidence="1">Cytoplasm</location>
    </subcellularLocation>
</comment>
<comment type="similarity">
    <text evidence="1">Belongs to the EPSP synthase family. MurA subfamily.</text>
</comment>
<feature type="chain" id="PRO_0000178898" description="UDP-N-acetylglucosamine 1-carboxyvinyltransferase">
    <location>
        <begin position="1"/>
        <end position="417"/>
    </location>
</feature>
<feature type="active site" description="Proton donor" evidence="1">
    <location>
        <position position="117"/>
    </location>
</feature>
<feature type="binding site" evidence="1">
    <location>
        <begin position="22"/>
        <end position="23"/>
    </location>
    <ligand>
        <name>phosphoenolpyruvate</name>
        <dbReference type="ChEBI" id="CHEBI:58702"/>
    </ligand>
</feature>
<feature type="binding site" evidence="1">
    <location>
        <position position="93"/>
    </location>
    <ligand>
        <name>UDP-N-acetyl-alpha-D-glucosamine</name>
        <dbReference type="ChEBI" id="CHEBI:57705"/>
    </ligand>
</feature>
<feature type="binding site" evidence="1">
    <location>
        <begin position="122"/>
        <end position="126"/>
    </location>
    <ligand>
        <name>UDP-N-acetyl-alpha-D-glucosamine</name>
        <dbReference type="ChEBI" id="CHEBI:57705"/>
    </ligand>
</feature>
<feature type="binding site" evidence="1">
    <location>
        <position position="304"/>
    </location>
    <ligand>
        <name>UDP-N-acetyl-alpha-D-glucosamine</name>
        <dbReference type="ChEBI" id="CHEBI:57705"/>
    </ligand>
</feature>
<feature type="binding site" evidence="1">
    <location>
        <position position="326"/>
    </location>
    <ligand>
        <name>UDP-N-acetyl-alpha-D-glucosamine</name>
        <dbReference type="ChEBI" id="CHEBI:57705"/>
    </ligand>
</feature>
<feature type="modified residue" description="2-(S-cysteinyl)pyruvic acid O-phosphothioketal" evidence="1">
    <location>
        <position position="117"/>
    </location>
</feature>
<gene>
    <name evidence="1" type="primary">murA</name>
    <name type="ordered locus">NMA0258</name>
</gene>
<reference key="1">
    <citation type="journal article" date="2000" name="Nature">
        <title>Complete DNA sequence of a serogroup A strain of Neisseria meningitidis Z2491.</title>
        <authorList>
            <person name="Parkhill J."/>
            <person name="Achtman M."/>
            <person name="James K.D."/>
            <person name="Bentley S.D."/>
            <person name="Churcher C.M."/>
            <person name="Klee S.R."/>
            <person name="Morelli G."/>
            <person name="Basham D."/>
            <person name="Brown D."/>
            <person name="Chillingworth T."/>
            <person name="Davies R.M."/>
            <person name="Davis P."/>
            <person name="Devlin K."/>
            <person name="Feltwell T."/>
            <person name="Hamlin N."/>
            <person name="Holroyd S."/>
            <person name="Jagels K."/>
            <person name="Leather S."/>
            <person name="Moule S."/>
            <person name="Mungall K.L."/>
            <person name="Quail M.A."/>
            <person name="Rajandream M.A."/>
            <person name="Rutherford K.M."/>
            <person name="Simmonds M."/>
            <person name="Skelton J."/>
            <person name="Whitehead S."/>
            <person name="Spratt B.G."/>
            <person name="Barrell B.G."/>
        </authorList>
    </citation>
    <scope>NUCLEOTIDE SEQUENCE [LARGE SCALE GENOMIC DNA]</scope>
    <source>
        <strain>DSM 15465 / Z2491</strain>
    </source>
</reference>
<protein>
    <recommendedName>
        <fullName evidence="1">UDP-N-acetylglucosamine 1-carboxyvinyltransferase</fullName>
        <ecNumber evidence="1">2.5.1.7</ecNumber>
    </recommendedName>
    <alternativeName>
        <fullName evidence="1">Enoylpyruvate transferase</fullName>
    </alternativeName>
    <alternativeName>
        <fullName evidence="1">UDP-N-acetylglucosamine enolpyruvyl transferase</fullName>
        <shortName evidence="1">EPT</shortName>
    </alternativeName>
</protein>